<comment type="function">
    <text evidence="1">Endonuclease that specifically degrades the RNA of RNA-DNA hybrids.</text>
</comment>
<comment type="catalytic activity">
    <reaction evidence="1">
        <text>Endonucleolytic cleavage to 5'-phosphomonoester.</text>
        <dbReference type="EC" id="3.1.26.4"/>
    </reaction>
</comment>
<comment type="cofactor">
    <cofactor evidence="1">
        <name>Mn(2+)</name>
        <dbReference type="ChEBI" id="CHEBI:29035"/>
    </cofactor>
    <cofactor evidence="1">
        <name>Mg(2+)</name>
        <dbReference type="ChEBI" id="CHEBI:18420"/>
    </cofactor>
    <text evidence="1">Manganese or magnesium. Binds 1 divalent metal ion per monomer in the absence of substrate. May bind a second metal ion after substrate binding.</text>
</comment>
<comment type="subcellular location">
    <subcellularLocation>
        <location evidence="1">Cytoplasm</location>
    </subcellularLocation>
</comment>
<comment type="similarity">
    <text evidence="1">Belongs to the RNase HII family. RnhC subfamily.</text>
</comment>
<accession>C1CCH0</accession>
<protein>
    <recommendedName>
        <fullName evidence="1">Ribonuclease HIII</fullName>
        <shortName evidence="1">RNase HIII</shortName>
        <ecNumber evidence="1">3.1.26.4</ecNumber>
    </recommendedName>
</protein>
<feature type="chain" id="PRO_1000117706" description="Ribonuclease HIII">
    <location>
        <begin position="1"/>
        <end position="293"/>
    </location>
</feature>
<feature type="domain" description="RNase H type-2" evidence="2">
    <location>
        <begin position="78"/>
        <end position="293"/>
    </location>
</feature>
<feature type="binding site" evidence="1">
    <location>
        <position position="84"/>
    </location>
    <ligand>
        <name>a divalent metal cation</name>
        <dbReference type="ChEBI" id="CHEBI:60240"/>
    </ligand>
</feature>
<feature type="binding site" evidence="1">
    <location>
        <position position="85"/>
    </location>
    <ligand>
        <name>a divalent metal cation</name>
        <dbReference type="ChEBI" id="CHEBI:60240"/>
    </ligand>
</feature>
<feature type="binding site" evidence="1">
    <location>
        <position position="187"/>
    </location>
    <ligand>
        <name>a divalent metal cation</name>
        <dbReference type="ChEBI" id="CHEBI:60240"/>
    </ligand>
</feature>
<reference key="1">
    <citation type="journal article" date="2010" name="Genome Biol.">
        <title>Structure and dynamics of the pan-genome of Streptococcus pneumoniae and closely related species.</title>
        <authorList>
            <person name="Donati C."/>
            <person name="Hiller N.L."/>
            <person name="Tettelin H."/>
            <person name="Muzzi A."/>
            <person name="Croucher N.J."/>
            <person name="Angiuoli S.V."/>
            <person name="Oggioni M."/>
            <person name="Dunning Hotopp J.C."/>
            <person name="Hu F.Z."/>
            <person name="Riley D.R."/>
            <person name="Covacci A."/>
            <person name="Mitchell T.J."/>
            <person name="Bentley S.D."/>
            <person name="Kilian M."/>
            <person name="Ehrlich G.D."/>
            <person name="Rappuoli R."/>
            <person name="Moxon E.R."/>
            <person name="Masignani V."/>
        </authorList>
    </citation>
    <scope>NUCLEOTIDE SEQUENCE [LARGE SCALE GENOMIC DNA]</scope>
    <source>
        <strain>JJA</strain>
    </source>
</reference>
<evidence type="ECO:0000255" key="1">
    <source>
        <dbReference type="HAMAP-Rule" id="MF_00053"/>
    </source>
</evidence>
<evidence type="ECO:0000255" key="2">
    <source>
        <dbReference type="PROSITE-ProRule" id="PRU01319"/>
    </source>
</evidence>
<gene>
    <name evidence="1" type="primary">rnhC</name>
    <name type="ordered locus">SPJ_0391</name>
</gene>
<name>RNH3_STRZJ</name>
<organism>
    <name type="scientific">Streptococcus pneumoniae (strain JJA)</name>
    <dbReference type="NCBI Taxonomy" id="488222"/>
    <lineage>
        <taxon>Bacteria</taxon>
        <taxon>Bacillati</taxon>
        <taxon>Bacillota</taxon>
        <taxon>Bacilli</taxon>
        <taxon>Lactobacillales</taxon>
        <taxon>Streptococcaceae</taxon>
        <taxon>Streptococcus</taxon>
    </lineage>
</organism>
<dbReference type="EC" id="3.1.26.4" evidence="1"/>
<dbReference type="EMBL" id="CP000919">
    <property type="protein sequence ID" value="ACO18291.1"/>
    <property type="molecule type" value="Genomic_DNA"/>
</dbReference>
<dbReference type="RefSeq" id="WP_000146851.1">
    <property type="nucleotide sequence ID" value="NC_012466.1"/>
</dbReference>
<dbReference type="SMR" id="C1CCH0"/>
<dbReference type="KEGG" id="sjj:SPJ_0391"/>
<dbReference type="HOGENOM" id="CLU_059546_1_0_9"/>
<dbReference type="Proteomes" id="UP000002206">
    <property type="component" value="Chromosome"/>
</dbReference>
<dbReference type="GO" id="GO:0005737">
    <property type="term" value="C:cytoplasm"/>
    <property type="evidence" value="ECO:0007669"/>
    <property type="project" value="UniProtKB-SubCell"/>
</dbReference>
<dbReference type="GO" id="GO:0032299">
    <property type="term" value="C:ribonuclease H2 complex"/>
    <property type="evidence" value="ECO:0007669"/>
    <property type="project" value="TreeGrafter"/>
</dbReference>
<dbReference type="GO" id="GO:0000287">
    <property type="term" value="F:magnesium ion binding"/>
    <property type="evidence" value="ECO:0007669"/>
    <property type="project" value="UniProtKB-UniRule"/>
</dbReference>
<dbReference type="GO" id="GO:0003723">
    <property type="term" value="F:RNA binding"/>
    <property type="evidence" value="ECO:0007669"/>
    <property type="project" value="InterPro"/>
</dbReference>
<dbReference type="GO" id="GO:0004523">
    <property type="term" value="F:RNA-DNA hybrid ribonuclease activity"/>
    <property type="evidence" value="ECO:0007669"/>
    <property type="project" value="UniProtKB-UniRule"/>
</dbReference>
<dbReference type="GO" id="GO:0043137">
    <property type="term" value="P:DNA replication, removal of RNA primer"/>
    <property type="evidence" value="ECO:0007669"/>
    <property type="project" value="TreeGrafter"/>
</dbReference>
<dbReference type="GO" id="GO:0006298">
    <property type="term" value="P:mismatch repair"/>
    <property type="evidence" value="ECO:0007669"/>
    <property type="project" value="TreeGrafter"/>
</dbReference>
<dbReference type="CDD" id="cd06590">
    <property type="entry name" value="RNase_HII_bacteria_HIII_like"/>
    <property type="match status" value="1"/>
</dbReference>
<dbReference type="CDD" id="cd14796">
    <property type="entry name" value="RNAse_HIII_N"/>
    <property type="match status" value="1"/>
</dbReference>
<dbReference type="FunFam" id="3.30.420.10:FF:000047">
    <property type="entry name" value="Ribonuclease HIII"/>
    <property type="match status" value="1"/>
</dbReference>
<dbReference type="Gene3D" id="3.30.420.10">
    <property type="entry name" value="Ribonuclease H-like superfamily/Ribonuclease H"/>
    <property type="match status" value="1"/>
</dbReference>
<dbReference type="Gene3D" id="3.30.310.10">
    <property type="entry name" value="TATA-Binding Protein"/>
    <property type="match status" value="1"/>
</dbReference>
<dbReference type="HAMAP" id="MF_00053">
    <property type="entry name" value="RNase_HIII"/>
    <property type="match status" value="1"/>
</dbReference>
<dbReference type="InterPro" id="IPR001352">
    <property type="entry name" value="RNase_HII/HIII"/>
</dbReference>
<dbReference type="InterPro" id="IPR024567">
    <property type="entry name" value="RNase_HII/HIII_dom"/>
</dbReference>
<dbReference type="InterPro" id="IPR004641">
    <property type="entry name" value="RNase_HIII"/>
</dbReference>
<dbReference type="InterPro" id="IPR024568">
    <property type="entry name" value="RNase_HIII_N"/>
</dbReference>
<dbReference type="InterPro" id="IPR012337">
    <property type="entry name" value="RNaseH-like_sf"/>
</dbReference>
<dbReference type="InterPro" id="IPR036397">
    <property type="entry name" value="RNaseH_sf"/>
</dbReference>
<dbReference type="InterPro" id="IPR012295">
    <property type="entry name" value="TBP_dom_sf"/>
</dbReference>
<dbReference type="NCBIfam" id="TIGR00716">
    <property type="entry name" value="rnhC"/>
    <property type="match status" value="1"/>
</dbReference>
<dbReference type="PANTHER" id="PTHR10954:SF23">
    <property type="entry name" value="RIBONUCLEASE"/>
    <property type="match status" value="1"/>
</dbReference>
<dbReference type="PANTHER" id="PTHR10954">
    <property type="entry name" value="RIBONUCLEASE H2 SUBUNIT A"/>
    <property type="match status" value="1"/>
</dbReference>
<dbReference type="Pfam" id="PF11858">
    <property type="entry name" value="DUF3378"/>
    <property type="match status" value="1"/>
</dbReference>
<dbReference type="Pfam" id="PF01351">
    <property type="entry name" value="RNase_HII"/>
    <property type="match status" value="1"/>
</dbReference>
<dbReference type="PIRSF" id="PIRSF037748">
    <property type="entry name" value="RnhC"/>
    <property type="match status" value="1"/>
</dbReference>
<dbReference type="SUPFAM" id="SSF53098">
    <property type="entry name" value="Ribonuclease H-like"/>
    <property type="match status" value="1"/>
</dbReference>
<dbReference type="PROSITE" id="PS51975">
    <property type="entry name" value="RNASE_H_2"/>
    <property type="match status" value="1"/>
</dbReference>
<keyword id="KW-0963">Cytoplasm</keyword>
<keyword id="KW-0255">Endonuclease</keyword>
<keyword id="KW-0378">Hydrolase</keyword>
<keyword id="KW-0460">Magnesium</keyword>
<keyword id="KW-0479">Metal-binding</keyword>
<keyword id="KW-0540">Nuclease</keyword>
<sequence>MASITLTPSEKDIQAFLEHYQTSLAPSKNPYIRYFLKLPQATVSIYTSGKILLQGEGAEKYASFFGYQAVEQTSGQNLPLIGTDEVGNGSYFGGLAVVAAFVTPDQHDFLRKLGVGDSKTLTDQKIRQIAPILKEKIQHQALLLSPSKYNEVIGDRYNAVSVKVALHNQAIYLLLQKGVQPEKIVIDAFTSAKNYDKYLAQEANRFSNPISLEEKAEGKYLAVAVSSVIARDLFLENLENLGRELGYQLPSGAGTASDKVASQILQAYGMQGLSFCAKLHFKNTEKAKKRLER</sequence>
<proteinExistence type="inferred from homology"/>